<feature type="chain" id="PRO_0000143118" description="Bestrophin-2a">
    <location>
        <begin position="1"/>
        <end position="509"/>
    </location>
</feature>
<feature type="topological domain" description="Cytoplasmic" evidence="2">
    <location>
        <begin position="1"/>
        <end position="31"/>
    </location>
</feature>
<feature type="transmembrane region" description="Helical" evidence="10 14 15 16 17">
    <location>
        <begin position="32"/>
        <end position="51"/>
    </location>
</feature>
<feature type="topological domain" description="Extracellular" evidence="12">
    <location>
        <begin position="52"/>
        <end position="60"/>
    </location>
</feature>
<feature type="transmembrane region" description="Helical" evidence="10 14 15 16 17">
    <location>
        <begin position="61"/>
        <end position="82"/>
    </location>
</feature>
<feature type="topological domain" description="Cytoplasmic" evidence="12">
    <location>
        <begin position="83"/>
        <end position="238"/>
    </location>
</feature>
<feature type="transmembrane region" description="Helical" evidence="10 14 15 16 17">
    <location>
        <begin position="239"/>
        <end position="255"/>
    </location>
</feature>
<feature type="topological domain" description="Extracellular" evidence="12">
    <location>
        <begin position="256"/>
        <end position="274"/>
    </location>
</feature>
<feature type="transmembrane region" description="Helical" evidence="10 14 15 16 17">
    <location>
        <begin position="275"/>
        <end position="288"/>
    </location>
</feature>
<feature type="topological domain" description="Cytoplasmic" evidence="2">
    <location>
        <begin position="289"/>
        <end position="509"/>
    </location>
</feature>
<feature type="region of interest" description="Disordered" evidence="4">
    <location>
        <begin position="454"/>
        <end position="509"/>
    </location>
</feature>
<feature type="compositionally biased region" description="Pro residues" evidence="4">
    <location>
        <begin position="457"/>
        <end position="468"/>
    </location>
</feature>
<feature type="compositionally biased region" description="Pro residues" evidence="4">
    <location>
        <begin position="489"/>
        <end position="498"/>
    </location>
</feature>
<feature type="binding site" description="in other chain" evidence="10 14 15 16">
    <location>
        <position position="10"/>
    </location>
    <ligand>
        <name>Ca(2+)</name>
        <dbReference type="ChEBI" id="CHEBI:29108"/>
        <note>ligand shared between two neighboring subunits</note>
    </ligand>
</feature>
<feature type="binding site" evidence="10 14 15 16">
    <location>
        <position position="293"/>
    </location>
    <ligand>
        <name>Ca(2+)</name>
        <dbReference type="ChEBI" id="CHEBI:29108"/>
        <note>ligand shared between two neighboring subunits</note>
    </ligand>
</feature>
<feature type="binding site" evidence="10 14 15 16">
    <location>
        <position position="296"/>
    </location>
    <ligand>
        <name>Ca(2+)</name>
        <dbReference type="ChEBI" id="CHEBI:29108"/>
        <note>ligand shared between two neighboring subunits</note>
    </ligand>
</feature>
<feature type="binding site" evidence="10 14 15 16">
    <location>
        <position position="301"/>
    </location>
    <ligand>
        <name>Ca(2+)</name>
        <dbReference type="ChEBI" id="CHEBI:29108"/>
        <note>ligand shared between two neighboring subunits</note>
    </ligand>
</feature>
<feature type="binding site" evidence="10 14 15 16">
    <location>
        <position position="304"/>
    </location>
    <ligand>
        <name>Ca(2+)</name>
        <dbReference type="ChEBI" id="CHEBI:29108"/>
        <note>ligand shared between two neighboring subunits</note>
    </ligand>
</feature>
<feature type="mutagenesis site" description="Does not affect expression level. Does not affect interaction with GLUL. Does not affect tethering of GLUL to the membrane. Impairs channel activity." evidence="11">
    <original>G</original>
    <variation>A</variation>
    <location>
        <position position="299"/>
    </location>
</feature>
<feature type="mutagenesis site" description="Does not affect expression level. Does not affect interaction with GLUL. Does not affect tethering of GLUL to the membrane. Impairs channel activity." evidence="11">
    <original>D</original>
    <variation>A</variation>
    <location>
        <position position="304"/>
    </location>
</feature>
<feature type="sequence conflict" description="In Ref. 2; AAR99655 and 3; BAA90970." evidence="12" ref="2 3">
    <original>E</original>
    <variation>G</variation>
    <location>
        <position position="388"/>
    </location>
</feature>
<feature type="helix" evidence="18">
    <location>
        <begin position="7"/>
        <end position="9"/>
    </location>
</feature>
<feature type="helix" evidence="18">
    <location>
        <begin position="16"/>
        <end position="22"/>
    </location>
</feature>
<feature type="helix" evidence="18">
    <location>
        <begin position="28"/>
        <end position="52"/>
    </location>
</feature>
<feature type="helix" evidence="18">
    <location>
        <begin position="56"/>
        <end position="70"/>
    </location>
</feature>
<feature type="helix" evidence="18">
    <location>
        <begin position="75"/>
        <end position="98"/>
    </location>
</feature>
<feature type="helix" evidence="18">
    <location>
        <begin position="104"/>
        <end position="113"/>
    </location>
</feature>
<feature type="helix" evidence="18">
    <location>
        <begin position="119"/>
        <end position="143"/>
    </location>
</feature>
<feature type="helix" evidence="18">
    <location>
        <begin position="145"/>
        <end position="150"/>
    </location>
</feature>
<feature type="strand" evidence="19">
    <location>
        <begin position="151"/>
        <end position="153"/>
    </location>
</feature>
<feature type="helix" evidence="18">
    <location>
        <begin position="154"/>
        <end position="159"/>
    </location>
</feature>
<feature type="helix" evidence="18">
    <location>
        <begin position="165"/>
        <end position="173"/>
    </location>
</feature>
<feature type="helix" evidence="18">
    <location>
        <begin position="183"/>
        <end position="197"/>
    </location>
</feature>
<feature type="helix" evidence="18">
    <location>
        <begin position="204"/>
        <end position="229"/>
    </location>
</feature>
<feature type="helix" evidence="18">
    <location>
        <begin position="234"/>
        <end position="254"/>
    </location>
</feature>
<feature type="helix" evidence="18">
    <location>
        <begin position="260"/>
        <end position="262"/>
    </location>
</feature>
<feature type="helix" evidence="18">
    <location>
        <begin position="275"/>
        <end position="294"/>
    </location>
</feature>
<feature type="strand" evidence="18">
    <location>
        <begin position="299"/>
        <end position="301"/>
    </location>
</feature>
<feature type="helix" evidence="18">
    <location>
        <begin position="307"/>
        <end position="323"/>
    </location>
</feature>
<feature type="turn" evidence="19">
    <location>
        <begin position="324"/>
        <end position="327"/>
    </location>
</feature>
<feature type="turn" evidence="18">
    <location>
        <begin position="336"/>
        <end position="339"/>
    </location>
</feature>
<feature type="turn" evidence="18">
    <location>
        <begin position="349"/>
        <end position="351"/>
    </location>
</feature>
<feature type="helix" evidence="18">
    <location>
        <begin position="352"/>
        <end position="354"/>
    </location>
</feature>
<feature type="turn" evidence="18">
    <location>
        <begin position="363"/>
        <end position="366"/>
    </location>
</feature>
<feature type="helix" evidence="18">
    <location>
        <begin position="372"/>
        <end position="374"/>
    </location>
</feature>
<comment type="function">
    <text evidence="1 3 5 7 9 10 11">Ligand-gated anion channel that allows the movement of anions across cell membranes when activated by calcium (Ca2+) (PubMed:11904445, PubMed:18400985, PubMed:32251414, PubMed:35789156, PubMed:36289327). Transports a large specter of anions, namely mediates the movement of chloride, L-glutamate and iodide (PubMed:11904445, PubMed:18400985, PubMed:32251414, PubMed:35789156, PubMed:36289327). Calcium-binding triggers the dilation of the aperture, but calcium-dependent gating is only effective when the size of the passing anion is bigger than the closed aperture (By similarity). Mediates the calcium-activated hydrogencarbonate movement and participates in colonic hydrogencarbonate secretion concomitant with mucin secretion (By similarity). In non-pigmented epithelium (NPE), mediates the efflux of intracellular L-glutamate; binding of intracellular L-glutamate activates and open both the neck and the aperture of the channel, leading to L-glutamate exit promoting chloride influx movement from the extracellular side in trans (PubMed:36289327). Also exhibits a directional permeability for intracellular glutamine, in a similar manner as for L-glutamate (PubMed:36289327).</text>
</comment>
<comment type="catalytic activity">
    <reaction evidence="5 7 9 10 11">
        <text>chloride(in) = chloride(out)</text>
        <dbReference type="Rhea" id="RHEA:29823"/>
        <dbReference type="ChEBI" id="CHEBI:17996"/>
    </reaction>
</comment>
<comment type="catalytic activity">
    <reaction evidence="5 7">
        <text>hydrogencarbonate(in) = hydrogencarbonate(out)</text>
        <dbReference type="Rhea" id="RHEA:28695"/>
        <dbReference type="ChEBI" id="CHEBI:17544"/>
    </reaction>
</comment>
<comment type="catalytic activity">
    <reaction evidence="11">
        <text>L-glutamate(out) = L-glutamate(in)</text>
        <dbReference type="Rhea" id="RHEA:66336"/>
        <dbReference type="ChEBI" id="CHEBI:29985"/>
    </reaction>
</comment>
<comment type="catalytic activity">
    <reaction evidence="1">
        <text>iodide(out) = iodide(in)</text>
        <dbReference type="Rhea" id="RHEA:66324"/>
        <dbReference type="ChEBI" id="CHEBI:16382"/>
    </reaction>
</comment>
<comment type="catalytic activity">
    <reaction evidence="11">
        <text>L-glutamine(out) = L-glutamine(in)</text>
        <dbReference type="Rhea" id="RHEA:73419"/>
        <dbReference type="ChEBI" id="CHEBI:58359"/>
    </reaction>
</comment>
<comment type="activity regulation">
    <text evidence="11">Chloride channel activity is allosterically inhibited by GLUL/glutamine synthase (GS) which affects the gating at the aperture in the absence of intracellular glutamate (PubMed:36289327). Inhibitory effect of GLUL is relieved upon increasing of L-glutamate intracellular level (PubMed:36289327).</text>
</comment>
<comment type="subunit">
    <text evidence="10 11">Pentamer (PubMed:35789156). Interacts with GLUL; this interaction tethers a fraction of GLUL to the membrane, causing a decrease of cytosolic glutamine synthase (GS) activity and inhibits the chloride channel activity of BEST2 by affecting the gating at the aperture in the absence of intracellular glutamate (PubMed:36289327).</text>
</comment>
<comment type="interaction">
    <interactant intactId="EBI-19947314">
        <id>Q8NFU1</id>
    </interactant>
    <interactant intactId="EBI-13372810">
        <id>P78369</id>
        <label>CLDN10</label>
    </interactant>
    <organismsDiffer>false</organismsDiffer>
    <experiments>3</experiments>
</comment>
<comment type="interaction">
    <interactant intactId="EBI-19947314">
        <id>Q8NFU1</id>
    </interactant>
    <interactant intactId="EBI-372265">
        <id>P21964</id>
        <label>COMT</label>
    </interactant>
    <organismsDiffer>false</organismsDiffer>
    <experiments>3</experiments>
</comment>
<comment type="interaction">
    <interactant intactId="EBI-19947314">
        <id>Q8NFU1</id>
    </interactant>
    <interactant intactId="EBI-8646596">
        <id>P49447</id>
        <label>CYB561</label>
    </interactant>
    <organismsDiffer>false</organismsDiffer>
    <experiments>3</experiments>
</comment>
<comment type="interaction">
    <interactant intactId="EBI-19947314">
        <id>Q8NFU1</id>
    </interactant>
    <interactant intactId="EBI-8639143">
        <id>Q96LL9</id>
        <label>DNAJC30</label>
    </interactant>
    <organismsDiffer>false</organismsDiffer>
    <experiments>3</experiments>
</comment>
<comment type="interaction">
    <interactant intactId="EBI-19947314">
        <id>Q8NFU1</id>
    </interactant>
    <interactant intactId="EBI-1753674">
        <id>P52803</id>
        <label>EFNA5</label>
    </interactant>
    <organismsDiffer>false</organismsDiffer>
    <experiments>3</experiments>
</comment>
<comment type="interaction">
    <interactant intactId="EBI-19947314">
        <id>Q8NFU1</id>
    </interactant>
    <interactant intactId="EBI-12175685">
        <id>Q14802-3</id>
        <label>FXYD3</label>
    </interactant>
    <organismsDiffer>false</organismsDiffer>
    <experiments>3</experiments>
</comment>
<comment type="interaction">
    <interactant intactId="EBI-19947314">
        <id>Q8NFU1</id>
    </interactant>
    <interactant intactId="EBI-10178951">
        <id>O00155</id>
        <label>GPR25</label>
    </interactant>
    <organismsDiffer>false</organismsDiffer>
    <experiments>3</experiments>
</comment>
<comment type="interaction">
    <interactant intactId="EBI-19947314">
        <id>Q8NFU1</id>
    </interactant>
    <interactant intactId="EBI-750078">
        <id>Q13021</id>
        <label>MALL</label>
    </interactant>
    <organismsDiffer>false</organismsDiffer>
    <experiments>3</experiments>
</comment>
<comment type="interaction">
    <interactant intactId="EBI-19947314">
        <id>Q8NFU1</id>
    </interactant>
    <interactant intactId="EBI-3920969">
        <id>Q6N075</id>
        <label>MFSD5</label>
    </interactant>
    <organismsDiffer>false</organismsDiffer>
    <experiments>3</experiments>
</comment>
<comment type="interaction">
    <interactant intactId="EBI-19947314">
        <id>Q8NFU1</id>
    </interactant>
    <interactant intactId="EBI-8652812">
        <id>P54315</id>
        <label>PNLIPRP1</label>
    </interactant>
    <organismsDiffer>false</organismsDiffer>
    <experiments>3</experiments>
</comment>
<comment type="interaction">
    <interactant intactId="EBI-19947314">
        <id>Q8NFU1</id>
    </interactant>
    <interactant intactId="EBI-6269616">
        <id>Q96AA3</id>
        <label>RFT1</label>
    </interactant>
    <organismsDiffer>false</organismsDiffer>
    <experiments>3</experiments>
</comment>
<comment type="interaction">
    <interactant intactId="EBI-19947314">
        <id>Q8NFU1</id>
    </interactant>
    <interactant intactId="EBI-3907610">
        <id>Q8N2U9</id>
        <label>SLC66A2</label>
    </interactant>
    <organismsDiffer>false</organismsDiffer>
    <experiments>3</experiments>
</comment>
<comment type="interaction">
    <interactant intactId="EBI-19947314">
        <id>Q8NFU1</id>
    </interactant>
    <interactant intactId="EBI-10694905">
        <id>Q5BJH2-2</id>
        <label>TMEM128</label>
    </interactant>
    <organismsDiffer>false</organismsDiffer>
    <experiments>3</experiments>
</comment>
<comment type="interaction">
    <interactant intactId="EBI-19947314">
        <id>Q8NFU1</id>
    </interactant>
    <interactant intactId="EBI-2852148">
        <id>Q9H2L4</id>
        <label>TMEM60</label>
    </interactant>
    <organismsDiffer>false</organismsDiffer>
    <experiments>3</experiments>
</comment>
<comment type="interaction">
    <interactant intactId="EBI-19947314">
        <id>Q8NFU1</id>
    </interactant>
    <interactant intactId="EBI-4401271">
        <id>Q9H1C4</id>
        <label>UNC93B1</label>
    </interactant>
    <organismsDiffer>false</organismsDiffer>
    <experiments>3</experiments>
</comment>
<comment type="interaction">
    <interactant intactId="EBI-19947314">
        <id>Q8NFU1</id>
    </interactant>
    <interactant intactId="EBI-12237619">
        <id>O75841</id>
        <label>UPK1B</label>
    </interactant>
    <organismsDiffer>false</organismsDiffer>
    <experiments>3</experiments>
</comment>
<comment type="subcellular location">
    <subcellularLocation>
        <location evidence="1">Cell membrane</location>
        <topology evidence="10">Multi-pass membrane protein</topology>
    </subcellularLocation>
    <subcellularLocation>
        <location evidence="8">Basolateral cell membrane</location>
        <topology>Multi-pass membrane protein</topology>
    </subcellularLocation>
</comment>
<comment type="tissue specificity">
    <text evidence="6 8">Mainly confined to the retinal pigment epithelium (PubMed:12032738). Expressed in colon (PubMed:12032738, PubMed:20407206).</text>
</comment>
<comment type="domain">
    <text evidence="10">The C-terminal auto-inhibitory segment (AS) modulates the open/closed conformation of the channel and determines paralog specificity among bestrophins (PubMed:35789156). In a closed conformation, the C-terminal auto-inhibitory segment constricts the channel concentrically by wrapping around the channel periphery in an inter-protomer manner (PubMed:35789156).</text>
</comment>
<comment type="similarity">
    <text evidence="12">Belongs to the anion channel-forming bestrophin (TC 1.A.46) family. Calcium-sensitive chloride channel subfamily.</text>
</comment>
<comment type="sequence caution" evidence="12">
    <conflict type="erroneous initiation">
        <sequence resource="EMBL-CDS" id="BAA90970"/>
    </conflict>
    <text>Truncated N-terminus.</text>
</comment>
<protein>
    <recommendedName>
        <fullName evidence="12">Bestrophin-2a</fullName>
    </recommendedName>
    <alternativeName>
        <fullName>Vitelliform macular dystrophy 2-like protein 1</fullName>
    </alternativeName>
</protein>
<evidence type="ECO:0000250" key="1">
    <source>
        <dbReference type="UniProtKB" id="E1BF86"/>
    </source>
</evidence>
<evidence type="ECO:0000250" key="2">
    <source>
        <dbReference type="UniProtKB" id="O76090"/>
    </source>
</evidence>
<evidence type="ECO:0000250" key="3">
    <source>
        <dbReference type="UniProtKB" id="Q8BGM5"/>
    </source>
</evidence>
<evidence type="ECO:0000256" key="4">
    <source>
        <dbReference type="SAM" id="MobiDB-lite"/>
    </source>
</evidence>
<evidence type="ECO:0000269" key="5">
    <source>
    </source>
</evidence>
<evidence type="ECO:0000269" key="6">
    <source>
    </source>
</evidence>
<evidence type="ECO:0000269" key="7">
    <source>
    </source>
</evidence>
<evidence type="ECO:0000269" key="8">
    <source>
    </source>
</evidence>
<evidence type="ECO:0000269" key="9">
    <source>
    </source>
</evidence>
<evidence type="ECO:0000269" key="10">
    <source>
    </source>
</evidence>
<evidence type="ECO:0000269" key="11">
    <source>
    </source>
</evidence>
<evidence type="ECO:0000305" key="12"/>
<evidence type="ECO:0000312" key="13">
    <source>
        <dbReference type="HGNC" id="HGNC:17107"/>
    </source>
</evidence>
<evidence type="ECO:0007744" key="14">
    <source>
        <dbReference type="PDB" id="8D1E"/>
    </source>
</evidence>
<evidence type="ECO:0007744" key="15">
    <source>
        <dbReference type="PDB" id="8D1F"/>
    </source>
</evidence>
<evidence type="ECO:0007744" key="16">
    <source>
        <dbReference type="PDB" id="8D1G"/>
    </source>
</evidence>
<evidence type="ECO:0007744" key="17">
    <source>
        <dbReference type="PDB" id="8D1H"/>
    </source>
</evidence>
<evidence type="ECO:0007829" key="18">
    <source>
        <dbReference type="PDB" id="8D1E"/>
    </source>
</evidence>
<evidence type="ECO:0007829" key="19">
    <source>
        <dbReference type="PDB" id="8D1F"/>
    </source>
</evidence>
<keyword id="KW-0002">3D-structure</keyword>
<keyword id="KW-0106">Calcium</keyword>
<keyword id="KW-1003">Cell membrane</keyword>
<keyword id="KW-0868">Chloride</keyword>
<keyword id="KW-0869">Chloride channel</keyword>
<keyword id="KW-0407">Ion channel</keyword>
<keyword id="KW-0406">Ion transport</keyword>
<keyword id="KW-0472">Membrane</keyword>
<keyword id="KW-0479">Metal-binding</keyword>
<keyword id="KW-1267">Proteomics identification</keyword>
<keyword id="KW-1185">Reference proteome</keyword>
<keyword id="KW-0812">Transmembrane</keyword>
<keyword id="KW-1133">Transmembrane helix</keyword>
<keyword id="KW-0813">Transport</keyword>
<proteinExistence type="evidence at protein level"/>
<organism>
    <name type="scientific">Homo sapiens</name>
    <name type="common">Human</name>
    <dbReference type="NCBI Taxonomy" id="9606"/>
    <lineage>
        <taxon>Eukaryota</taxon>
        <taxon>Metazoa</taxon>
        <taxon>Chordata</taxon>
        <taxon>Craniata</taxon>
        <taxon>Vertebrata</taxon>
        <taxon>Euteleostomi</taxon>
        <taxon>Mammalia</taxon>
        <taxon>Eutheria</taxon>
        <taxon>Euarchontoglires</taxon>
        <taxon>Primates</taxon>
        <taxon>Haplorrhini</taxon>
        <taxon>Catarrhini</taxon>
        <taxon>Hominidae</taxon>
        <taxon>Homo</taxon>
    </lineage>
</organism>
<name>BEST2_HUMAN</name>
<dbReference type="EMBL" id="AF440756">
    <property type="protein sequence ID" value="AAM76995.1"/>
    <property type="molecule type" value="mRNA"/>
</dbReference>
<dbReference type="EMBL" id="AY515705">
    <property type="protein sequence ID" value="AAR99655.1"/>
    <property type="molecule type" value="mRNA"/>
</dbReference>
<dbReference type="EMBL" id="AK000139">
    <property type="protein sequence ID" value="BAA90970.1"/>
    <property type="status" value="ALT_INIT"/>
    <property type="molecule type" value="mRNA"/>
</dbReference>
<dbReference type="CCDS" id="CCDS42506.1"/>
<dbReference type="RefSeq" id="NP_060152.2">
    <property type="nucleotide sequence ID" value="NM_017682.3"/>
</dbReference>
<dbReference type="RefSeq" id="XP_005260020.1">
    <property type="nucleotide sequence ID" value="XM_005259963.3"/>
</dbReference>
<dbReference type="PDB" id="8D1E">
    <property type="method" value="EM"/>
    <property type="resolution" value="1.78 A"/>
    <property type="chains" value="A/B/C/D/E=1-406"/>
</dbReference>
<dbReference type="PDB" id="8D1F">
    <property type="method" value="EM"/>
    <property type="resolution" value="1.82 A"/>
    <property type="chains" value="A/B/C/D/E=1-406"/>
</dbReference>
<dbReference type="PDB" id="8D1G">
    <property type="method" value="EM"/>
    <property type="resolution" value="2.07 A"/>
    <property type="chains" value="A/B/C/D/E=1-406"/>
</dbReference>
<dbReference type="PDB" id="8D1H">
    <property type="method" value="EM"/>
    <property type="resolution" value="1.94 A"/>
    <property type="chains" value="A/B/C/D/E=1-406"/>
</dbReference>
<dbReference type="PDB" id="9DYH">
    <property type="method" value="EM"/>
    <property type="resolution" value="3.15 A"/>
    <property type="chains" value="A/B/C/D/E=1-509"/>
</dbReference>
<dbReference type="PDB" id="9DYI">
    <property type="method" value="EM"/>
    <property type="resolution" value="3.03 A"/>
    <property type="chains" value="A/B/C/D/E=1-509"/>
</dbReference>
<dbReference type="PDB" id="9DYJ">
    <property type="method" value="EM"/>
    <property type="resolution" value="2.31 A"/>
    <property type="chains" value="A/B/C/D/E=1-509"/>
</dbReference>
<dbReference type="PDB" id="9DYK">
    <property type="method" value="EM"/>
    <property type="resolution" value="2.27 A"/>
    <property type="chains" value="A/B/C/D/E=1-406"/>
</dbReference>
<dbReference type="PDB" id="9DYN">
    <property type="method" value="EM"/>
    <property type="resolution" value="2.44 A"/>
    <property type="chains" value="A/B/C/D/E=1-509"/>
</dbReference>
<dbReference type="PDB" id="9DYO">
    <property type="method" value="EM"/>
    <property type="resolution" value="2.57 A"/>
    <property type="chains" value="A/B/C/D/E=1-509"/>
</dbReference>
<dbReference type="PDBsum" id="8D1E"/>
<dbReference type="PDBsum" id="8D1F"/>
<dbReference type="PDBsum" id="8D1G"/>
<dbReference type="PDBsum" id="8D1H"/>
<dbReference type="PDBsum" id="9DYH"/>
<dbReference type="PDBsum" id="9DYI"/>
<dbReference type="PDBsum" id="9DYJ"/>
<dbReference type="PDBsum" id="9DYK"/>
<dbReference type="PDBsum" id="9DYN"/>
<dbReference type="PDBsum" id="9DYO"/>
<dbReference type="EMDB" id="EMD-27127"/>
<dbReference type="EMDB" id="EMD-27128"/>
<dbReference type="EMDB" id="EMD-27129"/>
<dbReference type="EMDB" id="EMD-27130"/>
<dbReference type="EMDB" id="EMD-47304"/>
<dbReference type="EMDB" id="EMD-47305"/>
<dbReference type="EMDB" id="EMD-47306"/>
<dbReference type="EMDB" id="EMD-47307"/>
<dbReference type="EMDB" id="EMD-47310"/>
<dbReference type="EMDB" id="EMD-47311"/>
<dbReference type="SMR" id="Q8NFU1"/>
<dbReference type="BioGRID" id="120185">
    <property type="interactions" value="17"/>
</dbReference>
<dbReference type="FunCoup" id="Q8NFU1">
    <property type="interactions" value="36"/>
</dbReference>
<dbReference type="IntAct" id="Q8NFU1">
    <property type="interactions" value="16"/>
</dbReference>
<dbReference type="STRING" id="9606.ENSP00000448310"/>
<dbReference type="TCDB" id="1.A.46.1.2">
    <property type="family name" value="the anion channel-forming bestrophin (bestrophin) family"/>
</dbReference>
<dbReference type="GlyGen" id="Q8NFU1">
    <property type="glycosylation" value="1 site, 1 N-linked glycan (1 site)"/>
</dbReference>
<dbReference type="iPTMnet" id="Q8NFU1"/>
<dbReference type="PhosphoSitePlus" id="Q8NFU1"/>
<dbReference type="BioMuta" id="BEST2"/>
<dbReference type="DMDM" id="38503353"/>
<dbReference type="MassIVE" id="Q8NFU1"/>
<dbReference type="PaxDb" id="9606-ENSP00000448310"/>
<dbReference type="PeptideAtlas" id="Q8NFU1"/>
<dbReference type="ProteomicsDB" id="73356"/>
<dbReference type="TopDownProteomics" id="Q8NFU1"/>
<dbReference type="Antibodypedia" id="26152">
    <property type="antibodies" value="146 antibodies from 24 providers"/>
</dbReference>
<dbReference type="DNASU" id="54831"/>
<dbReference type="Ensembl" id="ENST00000042931.1">
    <property type="protein sequence ID" value="ENSP00000042931.1"/>
    <property type="gene ID" value="ENSG00000039987.7"/>
</dbReference>
<dbReference type="Ensembl" id="ENST00000549706.5">
    <property type="protein sequence ID" value="ENSP00000448310.1"/>
    <property type="gene ID" value="ENSG00000039987.7"/>
</dbReference>
<dbReference type="Ensembl" id="ENST00000553030.6">
    <property type="protein sequence ID" value="ENSP00000447203.1"/>
    <property type="gene ID" value="ENSG00000039987.7"/>
</dbReference>
<dbReference type="GeneID" id="54831"/>
<dbReference type="KEGG" id="hsa:54831"/>
<dbReference type="MANE-Select" id="ENST00000553030.6">
    <property type="protein sequence ID" value="ENSP00000447203.1"/>
    <property type="RefSeq nucleotide sequence ID" value="NM_017682.3"/>
    <property type="RefSeq protein sequence ID" value="NP_060152.2"/>
</dbReference>
<dbReference type="UCSC" id="uc002mux.4">
    <property type="organism name" value="human"/>
</dbReference>
<dbReference type="AGR" id="HGNC:17107"/>
<dbReference type="CTD" id="54831"/>
<dbReference type="DisGeNET" id="54831"/>
<dbReference type="GeneCards" id="BEST2"/>
<dbReference type="HGNC" id="HGNC:17107">
    <property type="gene designation" value="BEST2"/>
</dbReference>
<dbReference type="HPA" id="ENSG00000039987">
    <property type="expression patterns" value="Group enriched (intestine, skin)"/>
</dbReference>
<dbReference type="MIM" id="607335">
    <property type="type" value="gene"/>
</dbReference>
<dbReference type="neXtProt" id="NX_Q8NFU1"/>
<dbReference type="OpenTargets" id="ENSG00000039987"/>
<dbReference type="PharmGKB" id="PA162377481"/>
<dbReference type="VEuPathDB" id="HostDB:ENSG00000039987"/>
<dbReference type="eggNOG" id="KOG3547">
    <property type="taxonomic scope" value="Eukaryota"/>
</dbReference>
<dbReference type="GeneTree" id="ENSGT00940000161361"/>
<dbReference type="HOGENOM" id="CLU_018069_0_0_1"/>
<dbReference type="InParanoid" id="Q8NFU1"/>
<dbReference type="OMA" id="APECGCG"/>
<dbReference type="OrthoDB" id="201595at2759"/>
<dbReference type="PAN-GO" id="Q8NFU1">
    <property type="GO annotations" value="0 GO annotations based on evolutionary models"/>
</dbReference>
<dbReference type="PhylomeDB" id="Q8NFU1"/>
<dbReference type="TreeFam" id="TF315803"/>
<dbReference type="PathwayCommons" id="Q8NFU1"/>
<dbReference type="Reactome" id="R-HSA-2672351">
    <property type="pathway name" value="Stimuli-sensing channels"/>
</dbReference>
<dbReference type="SignaLink" id="Q8NFU1"/>
<dbReference type="BioGRID-ORCS" id="54831">
    <property type="hits" value="12 hits in 1141 CRISPR screens"/>
</dbReference>
<dbReference type="GeneWiki" id="BEST2"/>
<dbReference type="GenomeRNAi" id="54831"/>
<dbReference type="Pharos" id="Q8NFU1">
    <property type="development level" value="Tbio"/>
</dbReference>
<dbReference type="PRO" id="PR:Q8NFU1"/>
<dbReference type="Proteomes" id="UP000005640">
    <property type="component" value="Chromosome 19"/>
</dbReference>
<dbReference type="RNAct" id="Q8NFU1">
    <property type="molecule type" value="protein"/>
</dbReference>
<dbReference type="Bgee" id="ENSG00000039987">
    <property type="expression patterns" value="Expressed in mucosa of transverse colon and 101 other cell types or tissues"/>
</dbReference>
<dbReference type="ExpressionAtlas" id="Q8NFU1">
    <property type="expression patterns" value="baseline and differential"/>
</dbReference>
<dbReference type="GO" id="GO:0016323">
    <property type="term" value="C:basolateral plasma membrane"/>
    <property type="evidence" value="ECO:0000250"/>
    <property type="project" value="UniProtKB"/>
</dbReference>
<dbReference type="GO" id="GO:0034707">
    <property type="term" value="C:chloride channel complex"/>
    <property type="evidence" value="ECO:0000250"/>
    <property type="project" value="BHF-UCL"/>
</dbReference>
<dbReference type="GO" id="GO:0005929">
    <property type="term" value="C:cilium"/>
    <property type="evidence" value="ECO:0000250"/>
    <property type="project" value="HGNC-UCL"/>
</dbReference>
<dbReference type="GO" id="GO:0005886">
    <property type="term" value="C:plasma membrane"/>
    <property type="evidence" value="ECO:0000250"/>
    <property type="project" value="UniProtKB"/>
</dbReference>
<dbReference type="GO" id="GO:0160133">
    <property type="term" value="F:bicarbonate channel activity"/>
    <property type="evidence" value="ECO:0000314"/>
    <property type="project" value="UniProtKB"/>
</dbReference>
<dbReference type="GO" id="GO:0005254">
    <property type="term" value="F:chloride channel activity"/>
    <property type="evidence" value="ECO:0000314"/>
    <property type="project" value="UniProtKB"/>
</dbReference>
<dbReference type="GO" id="GO:0005217">
    <property type="term" value="F:intracellularly ligand-gated monoatomic ion channel activity"/>
    <property type="evidence" value="ECO:0000314"/>
    <property type="project" value="UniProtKB"/>
</dbReference>
<dbReference type="GO" id="GO:0099095">
    <property type="term" value="F:ligand-gated monoatomic anion channel activity"/>
    <property type="evidence" value="ECO:0000250"/>
    <property type="project" value="UniProtKB"/>
</dbReference>
<dbReference type="GO" id="GO:0099094">
    <property type="term" value="F:ligand-gated monoatomic cation channel activity"/>
    <property type="evidence" value="ECO:0000315"/>
    <property type="project" value="UniProtKB"/>
</dbReference>
<dbReference type="GO" id="GO:0046872">
    <property type="term" value="F:metal ion binding"/>
    <property type="evidence" value="ECO:0007669"/>
    <property type="project" value="UniProtKB-KW"/>
</dbReference>
<dbReference type="GO" id="GO:0051899">
    <property type="term" value="P:membrane depolarization"/>
    <property type="evidence" value="ECO:0000250"/>
    <property type="project" value="HGNC-UCL"/>
</dbReference>
<dbReference type="GO" id="GO:0007608">
    <property type="term" value="P:sensory perception of smell"/>
    <property type="evidence" value="ECO:0000250"/>
    <property type="project" value="HGNC-UCL"/>
</dbReference>
<dbReference type="InterPro" id="IPR000615">
    <property type="entry name" value="Bestrophin"/>
</dbReference>
<dbReference type="InterPro" id="IPR021134">
    <property type="entry name" value="Bestrophin-like"/>
</dbReference>
<dbReference type="PANTHER" id="PTHR10736">
    <property type="entry name" value="BESTROPHIN"/>
    <property type="match status" value="1"/>
</dbReference>
<dbReference type="PANTHER" id="PTHR10736:SF1">
    <property type="entry name" value="BESTROPHIN-2"/>
    <property type="match status" value="1"/>
</dbReference>
<dbReference type="Pfam" id="PF01062">
    <property type="entry name" value="Bestrophin"/>
    <property type="match status" value="1"/>
</dbReference>
<accession>Q8NFU1</accession>
<accession>Q53YQ8</accession>
<accession>Q9NXP0</accession>
<reference key="1">
    <citation type="journal article" date="2002" name="Eur. J. Hum. Genet.">
        <title>Three novel human VMD2-like genes are members of the evolutionary highly conserved RFP-TM family.</title>
        <authorList>
            <person name="Stoehr H."/>
            <person name="Marquardt A."/>
            <person name="Nanda I."/>
            <person name="Schmid M."/>
            <person name="Weber B.H.F."/>
        </authorList>
    </citation>
    <scope>NUCLEOTIDE SEQUENCE [MRNA]</scope>
    <scope>TISSUE SPECIFICITY</scope>
</reference>
<reference key="2">
    <citation type="journal article" date="2003" name="J. Biol. Chem.">
        <title>Structure-function analysis of the bestrophin family of anion channels.</title>
        <authorList>
            <person name="Tsunenari T."/>
            <person name="Sun H."/>
            <person name="Williams J."/>
            <person name="Cahill H."/>
            <person name="Smallwood P."/>
            <person name="Yau K.-W."/>
            <person name="Nathans J."/>
        </authorList>
    </citation>
    <scope>NUCLEOTIDE SEQUENCE [MRNA]</scope>
</reference>
<reference key="3">
    <citation type="journal article" date="2004" name="Nat. Genet.">
        <title>Complete sequencing and characterization of 21,243 full-length human cDNAs.</title>
        <authorList>
            <person name="Ota T."/>
            <person name="Suzuki Y."/>
            <person name="Nishikawa T."/>
            <person name="Otsuki T."/>
            <person name="Sugiyama T."/>
            <person name="Irie R."/>
            <person name="Wakamatsu A."/>
            <person name="Hayashi K."/>
            <person name="Sato H."/>
            <person name="Nagai K."/>
            <person name="Kimura K."/>
            <person name="Makita H."/>
            <person name="Sekine M."/>
            <person name="Obayashi M."/>
            <person name="Nishi T."/>
            <person name="Shibahara T."/>
            <person name="Tanaka T."/>
            <person name="Ishii S."/>
            <person name="Yamamoto J."/>
            <person name="Saito K."/>
            <person name="Kawai Y."/>
            <person name="Isono Y."/>
            <person name="Nakamura Y."/>
            <person name="Nagahari K."/>
            <person name="Murakami K."/>
            <person name="Yasuda T."/>
            <person name="Iwayanagi T."/>
            <person name="Wagatsuma M."/>
            <person name="Shiratori A."/>
            <person name="Sudo H."/>
            <person name="Hosoiri T."/>
            <person name="Kaku Y."/>
            <person name="Kodaira H."/>
            <person name="Kondo H."/>
            <person name="Sugawara M."/>
            <person name="Takahashi M."/>
            <person name="Kanda K."/>
            <person name="Yokoi T."/>
            <person name="Furuya T."/>
            <person name="Kikkawa E."/>
            <person name="Omura Y."/>
            <person name="Abe K."/>
            <person name="Kamihara K."/>
            <person name="Katsuta N."/>
            <person name="Sato K."/>
            <person name="Tanikawa M."/>
            <person name="Yamazaki M."/>
            <person name="Ninomiya K."/>
            <person name="Ishibashi T."/>
            <person name="Yamashita H."/>
            <person name="Murakawa K."/>
            <person name="Fujimori K."/>
            <person name="Tanai H."/>
            <person name="Kimata M."/>
            <person name="Watanabe M."/>
            <person name="Hiraoka S."/>
            <person name="Chiba Y."/>
            <person name="Ishida S."/>
            <person name="Ono Y."/>
            <person name="Takiguchi S."/>
            <person name="Watanabe S."/>
            <person name="Yosida M."/>
            <person name="Hotuta T."/>
            <person name="Kusano J."/>
            <person name="Kanehori K."/>
            <person name="Takahashi-Fujii A."/>
            <person name="Hara H."/>
            <person name="Tanase T.-O."/>
            <person name="Nomura Y."/>
            <person name="Togiya S."/>
            <person name="Komai F."/>
            <person name="Hara R."/>
            <person name="Takeuchi K."/>
            <person name="Arita M."/>
            <person name="Imose N."/>
            <person name="Musashino K."/>
            <person name="Yuuki H."/>
            <person name="Oshima A."/>
            <person name="Sasaki N."/>
            <person name="Aotsuka S."/>
            <person name="Yoshikawa Y."/>
            <person name="Matsunawa H."/>
            <person name="Ichihara T."/>
            <person name="Shiohata N."/>
            <person name="Sano S."/>
            <person name="Moriya S."/>
            <person name="Momiyama H."/>
            <person name="Satoh N."/>
            <person name="Takami S."/>
            <person name="Terashima Y."/>
            <person name="Suzuki O."/>
            <person name="Nakagawa S."/>
            <person name="Senoh A."/>
            <person name="Mizoguchi H."/>
            <person name="Goto Y."/>
            <person name="Shimizu F."/>
            <person name="Wakebe H."/>
            <person name="Hishigaki H."/>
            <person name="Watanabe T."/>
            <person name="Sugiyama A."/>
            <person name="Takemoto M."/>
            <person name="Kawakami B."/>
            <person name="Yamazaki M."/>
            <person name="Watanabe K."/>
            <person name="Kumagai A."/>
            <person name="Itakura S."/>
            <person name="Fukuzumi Y."/>
            <person name="Fujimori Y."/>
            <person name="Komiyama M."/>
            <person name="Tashiro H."/>
            <person name="Tanigami A."/>
            <person name="Fujiwara T."/>
            <person name="Ono T."/>
            <person name="Yamada K."/>
            <person name="Fujii Y."/>
            <person name="Ozaki K."/>
            <person name="Hirao M."/>
            <person name="Ohmori Y."/>
            <person name="Kawabata A."/>
            <person name="Hikiji T."/>
            <person name="Kobatake N."/>
            <person name="Inagaki H."/>
            <person name="Ikema Y."/>
            <person name="Okamoto S."/>
            <person name="Okitani R."/>
            <person name="Kawakami T."/>
            <person name="Noguchi S."/>
            <person name="Itoh T."/>
            <person name="Shigeta K."/>
            <person name="Senba T."/>
            <person name="Matsumura K."/>
            <person name="Nakajima Y."/>
            <person name="Mizuno T."/>
            <person name="Morinaga M."/>
            <person name="Sasaki M."/>
            <person name="Togashi T."/>
            <person name="Oyama M."/>
            <person name="Hata H."/>
            <person name="Watanabe M."/>
            <person name="Komatsu T."/>
            <person name="Mizushima-Sugano J."/>
            <person name="Satoh T."/>
            <person name="Shirai Y."/>
            <person name="Takahashi Y."/>
            <person name="Nakagawa K."/>
            <person name="Okumura K."/>
            <person name="Nagase T."/>
            <person name="Nomura N."/>
            <person name="Kikuchi H."/>
            <person name="Masuho Y."/>
            <person name="Yamashita R."/>
            <person name="Nakai K."/>
            <person name="Yada T."/>
            <person name="Nakamura Y."/>
            <person name="Ohara O."/>
            <person name="Isogai T."/>
            <person name="Sugano S."/>
        </authorList>
    </citation>
    <scope>NUCLEOTIDE SEQUENCE [LARGE SCALE MRNA] OF 23-509</scope>
    <source>
        <tissue>Colon</tissue>
    </source>
</reference>
<reference key="4">
    <citation type="journal article" date="2002" name="Proc. Natl. Acad. Sci. U.S.A.">
        <title>The vitelliform macular dystrophy protein defines a new family of chloride channels.</title>
        <authorList>
            <person name="Sun H."/>
            <person name="Tsunenari T."/>
            <person name="Yau K.-W."/>
            <person name="Nathans J."/>
        </authorList>
    </citation>
    <scope>FUNCTION</scope>
    <scope>TRANSPORTER ACTIVITY</scope>
</reference>
<reference key="5">
    <citation type="journal article" date="2008" name="Am. J. Physiol.">
        <title>Bestrophin Cl- channels are highly permeable to HCO3-.</title>
        <authorList>
            <person name="Qu Z."/>
            <person name="Hartzell H.C."/>
        </authorList>
    </citation>
    <scope>FUNCTION</scope>
    <scope>TRANSPORTER ACTIVITY</scope>
</reference>
<reference key="6">
    <citation type="journal article" date="2010" name="J. Clin. Invest.">
        <title>Bestrophin-2 mediates bicarbonate transport by goblet cells in mouse colon.</title>
        <authorList>
            <person name="Yu K."/>
            <person name="Lujan R."/>
            <person name="Marmorstein A."/>
            <person name="Gabriel S."/>
            <person name="Hartzell H.C."/>
        </authorList>
    </citation>
    <scope>SUBCELLULAR LOCATION</scope>
    <scope>TISSUE SPECIFICITY</scope>
</reference>
<reference key="7">
    <citation type="journal article" date="2020" name="Nat. Struct. Mol. Biol.">
        <title>Structural and functional characterization of the bestrophin-2 anion channel.</title>
        <authorList>
            <person name="Owji A.P."/>
            <person name="Zhao Q."/>
            <person name="Ji C."/>
            <person name="Kittredge A."/>
            <person name="Hopiavuori A."/>
            <person name="Fu Z."/>
            <person name="Ward N."/>
            <person name="Clarke O.B."/>
            <person name="Shen Y."/>
            <person name="Zhang Y."/>
            <person name="Hendrickson W.A."/>
            <person name="Yang T."/>
        </authorList>
    </citation>
    <scope>FUNCTION</scope>
    <scope>TRANSPORTER ACTIVITY</scope>
</reference>
<reference key="8">
    <citation type="journal article" date="2022" name="Nature">
        <title>Bestrophin-2 and glutamine synthetase form a complex for glutamate release.</title>
        <authorList>
            <person name="Owji A.P."/>
            <person name="Yu K."/>
            <person name="Kittredge A."/>
            <person name="Wang J."/>
            <person name="Zhang Y."/>
            <person name="Yang T."/>
        </authorList>
    </citation>
    <scope>INTERACTION WITH GLUL</scope>
    <scope>FUNCTION</scope>
    <scope>TRANSPORTER ACTIVITY</scope>
    <scope>MUTAGENESIS OF GLY-299 AND ASP-304</scope>
</reference>
<reference evidence="14 15 16 17" key="9">
    <citation type="journal article" date="2022" name="Nat. Commun.">
        <title>Structures and gating mechanisms of human bestrophin anion channels.</title>
        <authorList>
            <person name="Owji A.P."/>
            <person name="Wang J."/>
            <person name="Kittredge A."/>
            <person name="Clark Z."/>
            <person name="Zhang Y."/>
            <person name="Hendrickson W.A."/>
            <person name="Yang T."/>
        </authorList>
    </citation>
    <scope>STRUCTURE BY ELECTRON MICROSCOPY (1.78 ANGSTROMS) OF 1-406 IN COMPLEX WITH CALCIUM AND CHLORIDE</scope>
    <scope>FUNCTION</scope>
    <scope>CATALYTIC ACTIVITY</scope>
    <scope>DOMAIN</scope>
    <scope>REGION</scope>
    <scope>SUBUNIT</scope>
    <scope>TOPOLOGY</scope>
</reference>
<gene>
    <name evidence="13" type="primary">BEST2</name>
    <name type="synonym">VMD2L1</name>
</gene>
<sequence>MTVTYTARVANARFGGFSQLLLLWRGSIYKLLWRELLCFLGFYMALSAAYRFVLTEGQKRYFEKLVIYCDQYASLIPVSFVLGFYVTLVVNRWWSQYLCMPLPDALMCVVAGTVHGRDDRGRLYRRTLMRYAGLSAVLILRSVSTAVFKRFPTIDHVVEAGFMTREERKKFENLNSSYNKYWVPCVWFSNLAAQARREGRIRDNSALKLLLEELNVFRGKCGMLFHYDWISVPLVYTQVVTIALYSYFLACLIGRQFLDPAQGYKDHDLDLCVPIFTLLQFFFYAGWLKVAEQLINPFGEDDDDFETNFLIDRNFQVSMLAVDEMYDDLAVLEKDLYWDAAEARAPYTAATVFQLRQPSFQGSTFDITLAKEDMQFQRLDGLDGPMGEAPGDFLQRLLPAGAGMVAGGPLGRRLSFLLRKNSCVSEASTGASCSCAVVPEGAAPECSCGDPLLDPGLPEPEAPPPAGPEPLTLIPGPVEPFSIVTMPGPRGPAPPWLPSPIGEEEENLA</sequence>